<keyword id="KW-0997">Cell inner membrane</keyword>
<keyword id="KW-1003">Cell membrane</keyword>
<keyword id="KW-0472">Membrane</keyword>
<keyword id="KW-0653">Protein transport</keyword>
<keyword id="KW-0811">Translocation</keyword>
<keyword id="KW-0812">Transmembrane</keyword>
<keyword id="KW-1133">Transmembrane helix</keyword>
<keyword id="KW-0813">Transport</keyword>
<accession>Q0I207</accession>
<gene>
    <name evidence="1" type="primary">tatA</name>
    <name type="ordered locus">HS_0545</name>
</gene>
<organism>
    <name type="scientific">Histophilus somni (strain 129Pt)</name>
    <name type="common">Haemophilus somnus</name>
    <dbReference type="NCBI Taxonomy" id="205914"/>
    <lineage>
        <taxon>Bacteria</taxon>
        <taxon>Pseudomonadati</taxon>
        <taxon>Pseudomonadota</taxon>
        <taxon>Gammaproteobacteria</taxon>
        <taxon>Pasteurellales</taxon>
        <taxon>Pasteurellaceae</taxon>
        <taxon>Histophilus</taxon>
    </lineage>
</organism>
<comment type="function">
    <text evidence="1">Part of the twin-arginine translocation (Tat) system that transports large folded proteins containing a characteristic twin-arginine motif in their signal peptide across membranes. TatA could form the protein-conducting channel of the Tat system.</text>
</comment>
<comment type="subunit">
    <text evidence="1">The Tat system comprises two distinct complexes: a TatABC complex, containing multiple copies of TatA, TatB and TatC subunits, and a separate TatA complex, containing only TatA subunits. Substrates initially bind to the TatABC complex, which probably triggers association of the separate TatA complex to form the active translocon.</text>
</comment>
<comment type="subcellular location">
    <subcellularLocation>
        <location evidence="1">Cell inner membrane</location>
        <topology evidence="1">Single-pass membrane protein</topology>
    </subcellularLocation>
</comment>
<comment type="similarity">
    <text evidence="1">Belongs to the TatA/E family.</text>
</comment>
<evidence type="ECO:0000255" key="1">
    <source>
        <dbReference type="HAMAP-Rule" id="MF_00236"/>
    </source>
</evidence>
<dbReference type="EMBL" id="CP000436">
    <property type="protein sequence ID" value="ABI24822.1"/>
    <property type="molecule type" value="Genomic_DNA"/>
</dbReference>
<dbReference type="SMR" id="Q0I207"/>
<dbReference type="KEGG" id="hso:HS_0545"/>
<dbReference type="eggNOG" id="COG1826">
    <property type="taxonomic scope" value="Bacteria"/>
</dbReference>
<dbReference type="HOGENOM" id="CLU_086034_5_1_6"/>
<dbReference type="GO" id="GO:0033281">
    <property type="term" value="C:TAT protein transport complex"/>
    <property type="evidence" value="ECO:0007669"/>
    <property type="project" value="UniProtKB-UniRule"/>
</dbReference>
<dbReference type="GO" id="GO:0008320">
    <property type="term" value="F:protein transmembrane transporter activity"/>
    <property type="evidence" value="ECO:0007669"/>
    <property type="project" value="UniProtKB-UniRule"/>
</dbReference>
<dbReference type="GO" id="GO:0043953">
    <property type="term" value="P:protein transport by the Tat complex"/>
    <property type="evidence" value="ECO:0007669"/>
    <property type="project" value="UniProtKB-UniRule"/>
</dbReference>
<dbReference type="Gene3D" id="1.20.5.3310">
    <property type="match status" value="1"/>
</dbReference>
<dbReference type="HAMAP" id="MF_00236">
    <property type="entry name" value="TatA_E"/>
    <property type="match status" value="1"/>
</dbReference>
<dbReference type="InterPro" id="IPR003369">
    <property type="entry name" value="TatA/B/E"/>
</dbReference>
<dbReference type="InterPro" id="IPR006312">
    <property type="entry name" value="TatA/E"/>
</dbReference>
<dbReference type="NCBIfam" id="NF002813">
    <property type="entry name" value="PRK02958.1"/>
    <property type="match status" value="1"/>
</dbReference>
<dbReference type="NCBIfam" id="TIGR01411">
    <property type="entry name" value="tatAE"/>
    <property type="match status" value="1"/>
</dbReference>
<dbReference type="PANTHER" id="PTHR42982">
    <property type="entry name" value="SEC-INDEPENDENT PROTEIN TRANSLOCASE PROTEIN TATA"/>
    <property type="match status" value="1"/>
</dbReference>
<dbReference type="PANTHER" id="PTHR42982:SF1">
    <property type="entry name" value="SEC-INDEPENDENT PROTEIN TRANSLOCASE PROTEIN TATA"/>
    <property type="match status" value="1"/>
</dbReference>
<dbReference type="Pfam" id="PF02416">
    <property type="entry name" value="TatA_B_E"/>
    <property type="match status" value="1"/>
</dbReference>
<sequence length="73" mass="8163">MGLSWQQLLILLLVVVVIFGTKKLRNIGSDLGGAVKDFKKAMNDDQPKDAEFKKISEEVEQTSVENSKQKEQA</sequence>
<proteinExistence type="inferred from homology"/>
<name>TATA_HISS1</name>
<reference key="1">
    <citation type="journal article" date="2007" name="J. Bacteriol.">
        <title>Complete genome sequence of Haemophilus somnus (Histophilus somni) strain 129Pt and comparison to Haemophilus ducreyi 35000HP and Haemophilus influenzae Rd.</title>
        <authorList>
            <person name="Challacombe J.F."/>
            <person name="Duncan A.J."/>
            <person name="Brettin T.S."/>
            <person name="Bruce D."/>
            <person name="Chertkov O."/>
            <person name="Detter J.C."/>
            <person name="Han C.S."/>
            <person name="Misra M."/>
            <person name="Richardson P."/>
            <person name="Tapia R."/>
            <person name="Thayer N."/>
            <person name="Xie G."/>
            <person name="Inzana T.J."/>
        </authorList>
    </citation>
    <scope>NUCLEOTIDE SEQUENCE [LARGE SCALE GENOMIC DNA]</scope>
    <source>
        <strain>129Pt</strain>
    </source>
</reference>
<protein>
    <recommendedName>
        <fullName evidence="1">Sec-independent protein translocase protein TatA</fullName>
    </recommendedName>
</protein>
<feature type="chain" id="PRO_1000078308" description="Sec-independent protein translocase protein TatA">
    <location>
        <begin position="1"/>
        <end position="73"/>
    </location>
</feature>
<feature type="transmembrane region" description="Helical" evidence="1">
    <location>
        <begin position="1"/>
        <end position="21"/>
    </location>
</feature>